<protein>
    <recommendedName>
        <fullName evidence="1">Small ribosomal subunit protein uS5</fullName>
    </recommendedName>
    <alternativeName>
        <fullName evidence="2">30S ribosomal protein S5</fullName>
    </alternativeName>
</protein>
<gene>
    <name evidence="1" type="primary">rpsE</name>
    <name type="ordered locus">SDY_3479</name>
</gene>
<feature type="chain" id="PRO_0000230369" description="Small ribosomal subunit protein uS5">
    <location>
        <begin position="1"/>
        <end position="167"/>
    </location>
</feature>
<feature type="domain" description="S5 DRBM" evidence="1">
    <location>
        <begin position="11"/>
        <end position="74"/>
    </location>
</feature>
<keyword id="KW-1185">Reference proteome</keyword>
<keyword id="KW-0687">Ribonucleoprotein</keyword>
<keyword id="KW-0689">Ribosomal protein</keyword>
<keyword id="KW-0694">RNA-binding</keyword>
<keyword id="KW-0699">rRNA-binding</keyword>
<sequence length="167" mass="17575">MAHIEKQAGELQEKLIAVNRVSKTVKGGRIFSFTALTVVGDGNGRVGFGYGKAREVPAAIQKAMEKARRNMINVALNNGTLQHPVKGAHTGSRVFMQPASEGTGIIAGGAMRAVLEVAGVHNVLAKAYGSTNPINVVRATIDGLENMNSPEMVAAKRGKSVEEILGK</sequence>
<evidence type="ECO:0000255" key="1">
    <source>
        <dbReference type="HAMAP-Rule" id="MF_01307"/>
    </source>
</evidence>
<evidence type="ECO:0000305" key="2"/>
<dbReference type="EMBL" id="CP000034">
    <property type="protein sequence ID" value="ABB63457.1"/>
    <property type="molecule type" value="Genomic_DNA"/>
</dbReference>
<dbReference type="RefSeq" id="WP_000940115.1">
    <property type="nucleotide sequence ID" value="NC_007606.1"/>
</dbReference>
<dbReference type="RefSeq" id="YP_404948.1">
    <property type="nucleotide sequence ID" value="NC_007606.1"/>
</dbReference>
<dbReference type="SMR" id="Q32B48"/>
<dbReference type="STRING" id="300267.SDY_3479"/>
<dbReference type="EnsemblBacteria" id="ABB63457">
    <property type="protein sequence ID" value="ABB63457"/>
    <property type="gene ID" value="SDY_3479"/>
</dbReference>
<dbReference type="KEGG" id="sdy:SDY_3479"/>
<dbReference type="PATRIC" id="fig|300267.13.peg.4132"/>
<dbReference type="HOGENOM" id="CLU_065898_2_2_6"/>
<dbReference type="Proteomes" id="UP000002716">
    <property type="component" value="Chromosome"/>
</dbReference>
<dbReference type="GO" id="GO:0015935">
    <property type="term" value="C:small ribosomal subunit"/>
    <property type="evidence" value="ECO:0007669"/>
    <property type="project" value="InterPro"/>
</dbReference>
<dbReference type="GO" id="GO:0019843">
    <property type="term" value="F:rRNA binding"/>
    <property type="evidence" value="ECO:0007669"/>
    <property type="project" value="UniProtKB-UniRule"/>
</dbReference>
<dbReference type="GO" id="GO:0003735">
    <property type="term" value="F:structural constituent of ribosome"/>
    <property type="evidence" value="ECO:0007669"/>
    <property type="project" value="InterPro"/>
</dbReference>
<dbReference type="GO" id="GO:0006412">
    <property type="term" value="P:translation"/>
    <property type="evidence" value="ECO:0007669"/>
    <property type="project" value="UniProtKB-UniRule"/>
</dbReference>
<dbReference type="FunFam" id="3.30.160.20:FF:000001">
    <property type="entry name" value="30S ribosomal protein S5"/>
    <property type="match status" value="1"/>
</dbReference>
<dbReference type="FunFam" id="3.30.230.10:FF:000002">
    <property type="entry name" value="30S ribosomal protein S5"/>
    <property type="match status" value="1"/>
</dbReference>
<dbReference type="Gene3D" id="3.30.160.20">
    <property type="match status" value="1"/>
</dbReference>
<dbReference type="Gene3D" id="3.30.230.10">
    <property type="match status" value="1"/>
</dbReference>
<dbReference type="HAMAP" id="MF_01307_B">
    <property type="entry name" value="Ribosomal_uS5_B"/>
    <property type="match status" value="1"/>
</dbReference>
<dbReference type="InterPro" id="IPR020568">
    <property type="entry name" value="Ribosomal_Su5_D2-typ_SF"/>
</dbReference>
<dbReference type="InterPro" id="IPR000851">
    <property type="entry name" value="Ribosomal_uS5"/>
</dbReference>
<dbReference type="InterPro" id="IPR005712">
    <property type="entry name" value="Ribosomal_uS5_bac-type"/>
</dbReference>
<dbReference type="InterPro" id="IPR005324">
    <property type="entry name" value="Ribosomal_uS5_C"/>
</dbReference>
<dbReference type="InterPro" id="IPR013810">
    <property type="entry name" value="Ribosomal_uS5_N"/>
</dbReference>
<dbReference type="InterPro" id="IPR018192">
    <property type="entry name" value="Ribosomal_uS5_N_CS"/>
</dbReference>
<dbReference type="InterPro" id="IPR014721">
    <property type="entry name" value="Ribsml_uS5_D2-typ_fold_subgr"/>
</dbReference>
<dbReference type="NCBIfam" id="TIGR01021">
    <property type="entry name" value="rpsE_bact"/>
    <property type="match status" value="1"/>
</dbReference>
<dbReference type="PANTHER" id="PTHR48277">
    <property type="entry name" value="MITOCHONDRIAL RIBOSOMAL PROTEIN S5"/>
    <property type="match status" value="1"/>
</dbReference>
<dbReference type="PANTHER" id="PTHR48277:SF1">
    <property type="entry name" value="MITOCHONDRIAL RIBOSOMAL PROTEIN S5"/>
    <property type="match status" value="1"/>
</dbReference>
<dbReference type="Pfam" id="PF00333">
    <property type="entry name" value="Ribosomal_S5"/>
    <property type="match status" value="1"/>
</dbReference>
<dbReference type="Pfam" id="PF03719">
    <property type="entry name" value="Ribosomal_S5_C"/>
    <property type="match status" value="1"/>
</dbReference>
<dbReference type="SUPFAM" id="SSF54768">
    <property type="entry name" value="dsRNA-binding domain-like"/>
    <property type="match status" value="1"/>
</dbReference>
<dbReference type="SUPFAM" id="SSF54211">
    <property type="entry name" value="Ribosomal protein S5 domain 2-like"/>
    <property type="match status" value="1"/>
</dbReference>
<dbReference type="PROSITE" id="PS00585">
    <property type="entry name" value="RIBOSOMAL_S5"/>
    <property type="match status" value="1"/>
</dbReference>
<dbReference type="PROSITE" id="PS50881">
    <property type="entry name" value="S5_DSRBD"/>
    <property type="match status" value="1"/>
</dbReference>
<reference key="1">
    <citation type="journal article" date="2005" name="Nucleic Acids Res.">
        <title>Genome dynamics and diversity of Shigella species, the etiologic agents of bacillary dysentery.</title>
        <authorList>
            <person name="Yang F."/>
            <person name="Yang J."/>
            <person name="Zhang X."/>
            <person name="Chen L."/>
            <person name="Jiang Y."/>
            <person name="Yan Y."/>
            <person name="Tang X."/>
            <person name="Wang J."/>
            <person name="Xiong Z."/>
            <person name="Dong J."/>
            <person name="Xue Y."/>
            <person name="Zhu Y."/>
            <person name="Xu X."/>
            <person name="Sun L."/>
            <person name="Chen S."/>
            <person name="Nie H."/>
            <person name="Peng J."/>
            <person name="Xu J."/>
            <person name="Wang Y."/>
            <person name="Yuan Z."/>
            <person name="Wen Y."/>
            <person name="Yao Z."/>
            <person name="Shen Y."/>
            <person name="Qiang B."/>
            <person name="Hou Y."/>
            <person name="Yu J."/>
            <person name="Jin Q."/>
        </authorList>
    </citation>
    <scope>NUCLEOTIDE SEQUENCE [LARGE SCALE GENOMIC DNA]</scope>
    <source>
        <strain>Sd197</strain>
    </source>
</reference>
<proteinExistence type="inferred from homology"/>
<organism>
    <name type="scientific">Shigella dysenteriae serotype 1 (strain Sd197)</name>
    <dbReference type="NCBI Taxonomy" id="300267"/>
    <lineage>
        <taxon>Bacteria</taxon>
        <taxon>Pseudomonadati</taxon>
        <taxon>Pseudomonadota</taxon>
        <taxon>Gammaproteobacteria</taxon>
        <taxon>Enterobacterales</taxon>
        <taxon>Enterobacteriaceae</taxon>
        <taxon>Shigella</taxon>
    </lineage>
</organism>
<comment type="function">
    <text evidence="1">With S4 and S12 plays an important role in translational accuracy.</text>
</comment>
<comment type="function">
    <text evidence="1">Located at the back of the 30S subunit body where it stabilizes the conformation of the head with respect to the body.</text>
</comment>
<comment type="subunit">
    <text evidence="1">Part of the 30S ribosomal subunit. Contacts proteins S4 and S8.</text>
</comment>
<comment type="domain">
    <text>The N-terminal domain interacts with the head of the 30S subunit; the C-terminal domain interacts with the body and contacts protein S4. The interaction surface between S4 and S5 is involved in control of translational fidelity.</text>
</comment>
<comment type="similarity">
    <text evidence="1">Belongs to the universal ribosomal protein uS5 family.</text>
</comment>
<name>RS5_SHIDS</name>
<accession>Q32B48</accession>